<sequence length="428" mass="45559">MTQILEVTAREILDSRGNPTVEVDVYTESGAIGRAAVPSGASTGTREALELRDKKSKRYGGKGVAQAVKNVNEIIAPLIIGMDAADQAAVDLAMLDEDGTENKSKLGANAILGVSLATARAAADAFGFPLYRYLGGVAGQTLPLPMMNIINGGEHAANNLDIQEFMIIPKGAKTAAEAVRMGAEVFANLKAILKKGGHATAVGDEGGFAPDLDTNEEAFKCIMDAIKAAGYKAGKDIVLAIDAAASEFCVKGKYELKGEGKSLTTTQMIDYYEEMISKYPIVSIEDGLAEGDWDGWGEMTQRLGSIQLVGDDIFVTNPSIFRKGIEKGVGNSILVKLNQIGSLTETLQTIDLAKRYGYTTVISHRSGETEDTFISDLAVAVNAGQIKTGSLSRTDRVAKYNQLIRIEEDLGRAASFGTPFDKITDSKK</sequence>
<gene>
    <name evidence="1" type="primary">eno</name>
    <name type="ordered locus">Dalk_2764</name>
</gene>
<keyword id="KW-0963">Cytoplasm</keyword>
<keyword id="KW-0324">Glycolysis</keyword>
<keyword id="KW-0456">Lyase</keyword>
<keyword id="KW-0460">Magnesium</keyword>
<keyword id="KW-0479">Metal-binding</keyword>
<keyword id="KW-1185">Reference proteome</keyword>
<keyword id="KW-0964">Secreted</keyword>
<feature type="chain" id="PRO_1000119570" description="Enolase">
    <location>
        <begin position="1"/>
        <end position="428"/>
    </location>
</feature>
<feature type="active site" description="Proton donor" evidence="1">
    <location>
        <position position="205"/>
    </location>
</feature>
<feature type="active site" description="Proton acceptor" evidence="1">
    <location>
        <position position="336"/>
    </location>
</feature>
<feature type="binding site" evidence="1">
    <location>
        <position position="163"/>
    </location>
    <ligand>
        <name>(2R)-2-phosphoglycerate</name>
        <dbReference type="ChEBI" id="CHEBI:58289"/>
    </ligand>
</feature>
<feature type="binding site" evidence="1">
    <location>
        <position position="242"/>
    </location>
    <ligand>
        <name>Mg(2+)</name>
        <dbReference type="ChEBI" id="CHEBI:18420"/>
    </ligand>
</feature>
<feature type="binding site" evidence="1">
    <location>
        <position position="285"/>
    </location>
    <ligand>
        <name>Mg(2+)</name>
        <dbReference type="ChEBI" id="CHEBI:18420"/>
    </ligand>
</feature>
<feature type="binding site" evidence="1">
    <location>
        <position position="311"/>
    </location>
    <ligand>
        <name>Mg(2+)</name>
        <dbReference type="ChEBI" id="CHEBI:18420"/>
    </ligand>
</feature>
<feature type="binding site" evidence="1">
    <location>
        <position position="336"/>
    </location>
    <ligand>
        <name>(2R)-2-phosphoglycerate</name>
        <dbReference type="ChEBI" id="CHEBI:58289"/>
    </ligand>
</feature>
<feature type="binding site" evidence="1">
    <location>
        <position position="365"/>
    </location>
    <ligand>
        <name>(2R)-2-phosphoglycerate</name>
        <dbReference type="ChEBI" id="CHEBI:58289"/>
    </ligand>
</feature>
<feature type="binding site" evidence="1">
    <location>
        <position position="366"/>
    </location>
    <ligand>
        <name>(2R)-2-phosphoglycerate</name>
        <dbReference type="ChEBI" id="CHEBI:58289"/>
    </ligand>
</feature>
<feature type="binding site" evidence="1">
    <location>
        <position position="387"/>
    </location>
    <ligand>
        <name>(2R)-2-phosphoglycerate</name>
        <dbReference type="ChEBI" id="CHEBI:58289"/>
    </ligand>
</feature>
<accession>B8FKT4</accession>
<protein>
    <recommendedName>
        <fullName evidence="1">Enolase</fullName>
        <ecNumber evidence="1">4.2.1.11</ecNumber>
    </recommendedName>
    <alternativeName>
        <fullName evidence="1">2-phospho-D-glycerate hydro-lyase</fullName>
    </alternativeName>
    <alternativeName>
        <fullName evidence="1">2-phosphoglycerate dehydratase</fullName>
    </alternativeName>
</protein>
<comment type="function">
    <text evidence="1">Catalyzes the reversible conversion of 2-phosphoglycerate (2-PG) into phosphoenolpyruvate (PEP). It is essential for the degradation of carbohydrates via glycolysis.</text>
</comment>
<comment type="catalytic activity">
    <reaction evidence="1">
        <text>(2R)-2-phosphoglycerate = phosphoenolpyruvate + H2O</text>
        <dbReference type="Rhea" id="RHEA:10164"/>
        <dbReference type="ChEBI" id="CHEBI:15377"/>
        <dbReference type="ChEBI" id="CHEBI:58289"/>
        <dbReference type="ChEBI" id="CHEBI:58702"/>
        <dbReference type="EC" id="4.2.1.11"/>
    </reaction>
</comment>
<comment type="cofactor">
    <cofactor evidence="1">
        <name>Mg(2+)</name>
        <dbReference type="ChEBI" id="CHEBI:18420"/>
    </cofactor>
    <text evidence="1">Binds a second Mg(2+) ion via substrate during catalysis.</text>
</comment>
<comment type="pathway">
    <text evidence="1">Carbohydrate degradation; glycolysis; pyruvate from D-glyceraldehyde 3-phosphate: step 4/5.</text>
</comment>
<comment type="subcellular location">
    <subcellularLocation>
        <location evidence="1">Cytoplasm</location>
    </subcellularLocation>
    <subcellularLocation>
        <location evidence="1">Secreted</location>
    </subcellularLocation>
    <subcellularLocation>
        <location evidence="1">Cell surface</location>
    </subcellularLocation>
    <text evidence="1">Fractions of enolase are present in both the cytoplasm and on the cell surface.</text>
</comment>
<comment type="similarity">
    <text evidence="1">Belongs to the enolase family.</text>
</comment>
<organism>
    <name type="scientific">Desulfatibacillum aliphaticivorans</name>
    <dbReference type="NCBI Taxonomy" id="218208"/>
    <lineage>
        <taxon>Bacteria</taxon>
        <taxon>Pseudomonadati</taxon>
        <taxon>Thermodesulfobacteriota</taxon>
        <taxon>Desulfobacteria</taxon>
        <taxon>Desulfobacterales</taxon>
        <taxon>Desulfatibacillaceae</taxon>
        <taxon>Desulfatibacillum</taxon>
    </lineage>
</organism>
<proteinExistence type="inferred from homology"/>
<evidence type="ECO:0000255" key="1">
    <source>
        <dbReference type="HAMAP-Rule" id="MF_00318"/>
    </source>
</evidence>
<dbReference type="EC" id="4.2.1.11" evidence="1"/>
<dbReference type="EMBL" id="CP001322">
    <property type="protein sequence ID" value="ACL04456.1"/>
    <property type="molecule type" value="Genomic_DNA"/>
</dbReference>
<dbReference type="RefSeq" id="WP_015947526.1">
    <property type="nucleotide sequence ID" value="NC_011768.1"/>
</dbReference>
<dbReference type="SMR" id="B8FKT4"/>
<dbReference type="KEGG" id="dal:Dalk_2764"/>
<dbReference type="eggNOG" id="COG0148">
    <property type="taxonomic scope" value="Bacteria"/>
</dbReference>
<dbReference type="HOGENOM" id="CLU_031223_2_1_7"/>
<dbReference type="UniPathway" id="UPA00109">
    <property type="reaction ID" value="UER00187"/>
</dbReference>
<dbReference type="Proteomes" id="UP000000739">
    <property type="component" value="Chromosome"/>
</dbReference>
<dbReference type="GO" id="GO:0009986">
    <property type="term" value="C:cell surface"/>
    <property type="evidence" value="ECO:0007669"/>
    <property type="project" value="UniProtKB-SubCell"/>
</dbReference>
<dbReference type="GO" id="GO:0005576">
    <property type="term" value="C:extracellular region"/>
    <property type="evidence" value="ECO:0007669"/>
    <property type="project" value="UniProtKB-SubCell"/>
</dbReference>
<dbReference type="GO" id="GO:0000015">
    <property type="term" value="C:phosphopyruvate hydratase complex"/>
    <property type="evidence" value="ECO:0007669"/>
    <property type="project" value="InterPro"/>
</dbReference>
<dbReference type="GO" id="GO:0000287">
    <property type="term" value="F:magnesium ion binding"/>
    <property type="evidence" value="ECO:0007669"/>
    <property type="project" value="UniProtKB-UniRule"/>
</dbReference>
<dbReference type="GO" id="GO:0004634">
    <property type="term" value="F:phosphopyruvate hydratase activity"/>
    <property type="evidence" value="ECO:0007669"/>
    <property type="project" value="UniProtKB-UniRule"/>
</dbReference>
<dbReference type="GO" id="GO:0006096">
    <property type="term" value="P:glycolytic process"/>
    <property type="evidence" value="ECO:0007669"/>
    <property type="project" value="UniProtKB-UniRule"/>
</dbReference>
<dbReference type="CDD" id="cd03313">
    <property type="entry name" value="enolase"/>
    <property type="match status" value="1"/>
</dbReference>
<dbReference type="FunFam" id="3.20.20.120:FF:000001">
    <property type="entry name" value="Enolase"/>
    <property type="match status" value="1"/>
</dbReference>
<dbReference type="FunFam" id="3.30.390.10:FF:000001">
    <property type="entry name" value="Enolase"/>
    <property type="match status" value="1"/>
</dbReference>
<dbReference type="Gene3D" id="3.20.20.120">
    <property type="entry name" value="Enolase-like C-terminal domain"/>
    <property type="match status" value="1"/>
</dbReference>
<dbReference type="Gene3D" id="3.30.390.10">
    <property type="entry name" value="Enolase-like, N-terminal domain"/>
    <property type="match status" value="1"/>
</dbReference>
<dbReference type="HAMAP" id="MF_00318">
    <property type="entry name" value="Enolase"/>
    <property type="match status" value="1"/>
</dbReference>
<dbReference type="InterPro" id="IPR000941">
    <property type="entry name" value="Enolase"/>
</dbReference>
<dbReference type="InterPro" id="IPR036849">
    <property type="entry name" value="Enolase-like_C_sf"/>
</dbReference>
<dbReference type="InterPro" id="IPR029017">
    <property type="entry name" value="Enolase-like_N"/>
</dbReference>
<dbReference type="InterPro" id="IPR020810">
    <property type="entry name" value="Enolase_C"/>
</dbReference>
<dbReference type="InterPro" id="IPR020809">
    <property type="entry name" value="Enolase_CS"/>
</dbReference>
<dbReference type="InterPro" id="IPR020811">
    <property type="entry name" value="Enolase_N"/>
</dbReference>
<dbReference type="NCBIfam" id="TIGR01060">
    <property type="entry name" value="eno"/>
    <property type="match status" value="1"/>
</dbReference>
<dbReference type="PANTHER" id="PTHR11902">
    <property type="entry name" value="ENOLASE"/>
    <property type="match status" value="1"/>
</dbReference>
<dbReference type="PANTHER" id="PTHR11902:SF1">
    <property type="entry name" value="ENOLASE"/>
    <property type="match status" value="1"/>
</dbReference>
<dbReference type="Pfam" id="PF00113">
    <property type="entry name" value="Enolase_C"/>
    <property type="match status" value="1"/>
</dbReference>
<dbReference type="Pfam" id="PF03952">
    <property type="entry name" value="Enolase_N"/>
    <property type="match status" value="1"/>
</dbReference>
<dbReference type="PIRSF" id="PIRSF001400">
    <property type="entry name" value="Enolase"/>
    <property type="match status" value="1"/>
</dbReference>
<dbReference type="PRINTS" id="PR00148">
    <property type="entry name" value="ENOLASE"/>
</dbReference>
<dbReference type="SFLD" id="SFLDF00002">
    <property type="entry name" value="enolase"/>
    <property type="match status" value="1"/>
</dbReference>
<dbReference type="SFLD" id="SFLDG00178">
    <property type="entry name" value="enolase"/>
    <property type="match status" value="1"/>
</dbReference>
<dbReference type="SMART" id="SM01192">
    <property type="entry name" value="Enolase_C"/>
    <property type="match status" value="1"/>
</dbReference>
<dbReference type="SMART" id="SM01193">
    <property type="entry name" value="Enolase_N"/>
    <property type="match status" value="1"/>
</dbReference>
<dbReference type="SUPFAM" id="SSF51604">
    <property type="entry name" value="Enolase C-terminal domain-like"/>
    <property type="match status" value="1"/>
</dbReference>
<dbReference type="SUPFAM" id="SSF54826">
    <property type="entry name" value="Enolase N-terminal domain-like"/>
    <property type="match status" value="1"/>
</dbReference>
<dbReference type="PROSITE" id="PS00164">
    <property type="entry name" value="ENOLASE"/>
    <property type="match status" value="1"/>
</dbReference>
<reference key="1">
    <citation type="journal article" date="2012" name="Environ. Microbiol.">
        <title>The genome sequence of Desulfatibacillum alkenivorans AK-01: a blueprint for anaerobic alkane oxidation.</title>
        <authorList>
            <person name="Callaghan A.V."/>
            <person name="Morris B.E."/>
            <person name="Pereira I.A."/>
            <person name="McInerney M.J."/>
            <person name="Austin R.N."/>
            <person name="Groves J.T."/>
            <person name="Kukor J.J."/>
            <person name="Suflita J.M."/>
            <person name="Young L.Y."/>
            <person name="Zylstra G.J."/>
            <person name="Wawrik B."/>
        </authorList>
    </citation>
    <scope>NUCLEOTIDE SEQUENCE [LARGE SCALE GENOMIC DNA]</scope>
    <source>
        <strain>AK-01</strain>
    </source>
</reference>
<name>ENO_DESAL</name>